<protein>
    <recommendedName>
        <fullName evidence="1">Protein ADP-ribosyltransferase PARP3</fullName>
        <ecNumber evidence="1">2.4.2.-</ecNumber>
    </recommendedName>
    <alternativeName>
        <fullName>NAD(+) ADP-ribosyltransferase 3</fullName>
        <shortName>ADPRT-3</shortName>
    </alternativeName>
    <alternativeName>
        <fullName>Poly [ADP-ribose] polymerase 3</fullName>
        <shortName>PARP-3</shortName>
    </alternativeName>
    <alternativeName>
        <fullName>Poly[ADP-ribose] synthase 3</fullName>
    </alternativeName>
</protein>
<organism>
    <name type="scientific">Arabidopsis thaliana</name>
    <name type="common">Mouse-ear cress</name>
    <dbReference type="NCBI Taxonomy" id="3702"/>
    <lineage>
        <taxon>Eukaryota</taxon>
        <taxon>Viridiplantae</taxon>
        <taxon>Streptophyta</taxon>
        <taxon>Embryophyta</taxon>
        <taxon>Tracheophyta</taxon>
        <taxon>Spermatophyta</taxon>
        <taxon>Magnoliopsida</taxon>
        <taxon>eudicotyledons</taxon>
        <taxon>Gunneridae</taxon>
        <taxon>Pentapetalae</taxon>
        <taxon>rosids</taxon>
        <taxon>malvids</taxon>
        <taxon>Brassicales</taxon>
        <taxon>Brassicaceae</taxon>
        <taxon>Camelineae</taxon>
        <taxon>Arabidopsis</taxon>
    </lineage>
</organism>
<reference key="1">
    <citation type="journal article" date="1998" name="DNA Res.">
        <title>Structural analysis of Arabidopsis thaliana chromosome 5. VI. Sequence features of the regions of 1,367,185 bp covered by 19 physically assigned P1 and TAC clones.</title>
        <authorList>
            <person name="Kotani H."/>
            <person name="Nakamura Y."/>
            <person name="Sato S."/>
            <person name="Asamizu E."/>
            <person name="Kaneko T."/>
            <person name="Miyajima N."/>
            <person name="Tabata S."/>
        </authorList>
    </citation>
    <scope>NUCLEOTIDE SEQUENCE [LARGE SCALE GENOMIC DNA]</scope>
    <source>
        <strain>cv. Columbia</strain>
    </source>
</reference>
<reference key="2">
    <citation type="journal article" date="2017" name="Plant J.">
        <title>Araport11: a complete reannotation of the Arabidopsis thaliana reference genome.</title>
        <authorList>
            <person name="Cheng C.Y."/>
            <person name="Krishnakumar V."/>
            <person name="Chan A.P."/>
            <person name="Thibaud-Nissen F."/>
            <person name="Schobel S."/>
            <person name="Town C.D."/>
        </authorList>
    </citation>
    <scope>GENOME REANNOTATION</scope>
    <source>
        <strain>cv. Columbia</strain>
    </source>
</reference>
<reference key="3">
    <citation type="journal article" date="2002" name="Science">
        <title>Functional annotation of a full-length Arabidopsis cDNA collection.</title>
        <authorList>
            <person name="Seki M."/>
            <person name="Narusaka M."/>
            <person name="Kamiya A."/>
            <person name="Ishida J."/>
            <person name="Satou M."/>
            <person name="Sakurai T."/>
            <person name="Nakajima M."/>
            <person name="Enju A."/>
            <person name="Akiyama K."/>
            <person name="Oono Y."/>
            <person name="Muramatsu M."/>
            <person name="Hayashizaki Y."/>
            <person name="Kawai J."/>
            <person name="Carninci P."/>
            <person name="Itoh M."/>
            <person name="Ishii Y."/>
            <person name="Arakawa T."/>
            <person name="Shibata K."/>
            <person name="Shinagawa A."/>
            <person name="Shinozaki K."/>
        </authorList>
    </citation>
    <scope>NUCLEOTIDE SEQUENCE [LARGE SCALE MRNA] OF 393-814</scope>
    <source>
        <strain>cv. Columbia</strain>
    </source>
</reference>
<sequence>MKVHETRSHAHMSGDEQKGNLRKHKAEGKLPESEQSQKKAKPENDDGRSVNGAGDAASEYNEFCKAVEENLSIDQIKEVLEINGQDCSAPEETLLAQCQDLLFYGALAKCPLCGGTLICDNEKRFVCGGEISEWCSCVFSTKDPPRKEEPVKIPDSVMNSAISDLIKKHQDPKSRPKRELGSADKPFVGMMISLMGRLTRTHQYWKKKIERNGGKVSNTVQGVTCLVVSPAERERGGTSKMVEAMEQGLPVVSEAWLIDSVEKHEAQPLEAYDVVSDLSVEGKGIPWDKQDPSEEAIESFSAELKMYGKRGVYMDTKLQERGGKIFEKDGLLYNCAFSICDLGKGRNEYCIMQLVTVPDSNLNMYFKRGKVGDDPNAEERLEEWEDEEAAIKEFARLFEEIAGNEFEPWEREKKIQKKPHKFFPIDMDDGIEVRSGALGLRQLGIASAHCKLDSFVANFIKVLCGQEIYNYALMELGLDPPDLPMGMLTDIHLKRCEEVLLEFVEKVKTTKETGQKAEAMWADFSSRWFSLMHSTRPMRLHDVNELADHAASAFETVRDINTASRLIGDMRGDTLDDPLSDRYKKLGCKISVVDKESEDYKMVVKYLETTYEPVKVSDVEYGVSVQNVFAVESDAIPSLDDIKKLPNKVLLWCGSRSSNLLRHIYKGFLPAVCSLPVPGYMFGRAIVCSDAAAEAARYGFTAVDRPEGFLVLAVASLGEEVTEFTSPPEDTKTLEDKKIGVKGLGRKKTEESEHFMWRDDIKVPCGRLVPSEHKDSPLEYNEYAVYDPKQTSIRFLVEVKYEEKGTEIVDVEPE</sequence>
<proteinExistence type="evidence at transcript level"/>
<gene>
    <name type="primary">PARP3</name>
    <name type="ordered locus">At5g22470</name>
    <name type="ORF">MQJ16_1</name>
</gene>
<name>PARP3_ARATH</name>
<dbReference type="EC" id="2.4.2.-" evidence="1"/>
<dbReference type="EMBL" id="AB012244">
    <property type="protein sequence ID" value="BAB09119.1"/>
    <property type="status" value="ALT_SEQ"/>
    <property type="molecule type" value="Genomic_DNA"/>
</dbReference>
<dbReference type="EMBL" id="CP002688">
    <property type="status" value="NOT_ANNOTATED_CDS"/>
    <property type="molecule type" value="Genomic_DNA"/>
</dbReference>
<dbReference type="EMBL" id="AK118123">
    <property type="protein sequence ID" value="BAC42749.1"/>
    <property type="molecule type" value="mRNA"/>
</dbReference>
<dbReference type="RefSeq" id="NP_001318618.1">
    <property type="nucleotide sequence ID" value="NM_001343735.1"/>
</dbReference>
<dbReference type="SMR" id="Q9FK91"/>
<dbReference type="STRING" id="3702.Q9FK91"/>
<dbReference type="PaxDb" id="3702-AT5G22470.1"/>
<dbReference type="GeneID" id="832308"/>
<dbReference type="KEGG" id="ath:AT5G22470"/>
<dbReference type="Araport" id="AT5G22470"/>
<dbReference type="TAIR" id="AT5G22470">
    <property type="gene designation" value="PARP3"/>
</dbReference>
<dbReference type="eggNOG" id="KOG1037">
    <property type="taxonomic scope" value="Eukaryota"/>
</dbReference>
<dbReference type="HOGENOM" id="CLU_004841_0_1_1"/>
<dbReference type="InParanoid" id="Q9FK91"/>
<dbReference type="PRO" id="PR:Q9FK91"/>
<dbReference type="Proteomes" id="UP000006548">
    <property type="component" value="Chromosome 5"/>
</dbReference>
<dbReference type="ExpressionAtlas" id="Q9FK91">
    <property type="expression patterns" value="baseline and differential"/>
</dbReference>
<dbReference type="GO" id="GO:0005730">
    <property type="term" value="C:nucleolus"/>
    <property type="evidence" value="ECO:0000318"/>
    <property type="project" value="GO_Central"/>
</dbReference>
<dbReference type="GO" id="GO:0003950">
    <property type="term" value="F:NAD+ poly-ADP-ribosyltransferase activity"/>
    <property type="evidence" value="ECO:0000318"/>
    <property type="project" value="GO_Central"/>
</dbReference>
<dbReference type="GO" id="GO:0140806">
    <property type="term" value="F:NAD+-protein-aspartate ADP-ribosyltransferase activity"/>
    <property type="evidence" value="ECO:0007669"/>
    <property type="project" value="RHEA"/>
</dbReference>
<dbReference type="GO" id="GO:0140807">
    <property type="term" value="F:NAD+-protein-glutamate ADP-ribosyltransferase activity"/>
    <property type="evidence" value="ECO:0007669"/>
    <property type="project" value="RHEA"/>
</dbReference>
<dbReference type="GO" id="GO:0016779">
    <property type="term" value="F:nucleotidyltransferase activity"/>
    <property type="evidence" value="ECO:0007669"/>
    <property type="project" value="UniProtKB-KW"/>
</dbReference>
<dbReference type="GO" id="GO:0008270">
    <property type="term" value="F:zinc ion binding"/>
    <property type="evidence" value="ECO:0007669"/>
    <property type="project" value="UniProtKB-KW"/>
</dbReference>
<dbReference type="GO" id="GO:0006302">
    <property type="term" value="P:double-strand break repair"/>
    <property type="evidence" value="ECO:0000318"/>
    <property type="project" value="GO_Central"/>
</dbReference>
<dbReference type="CDD" id="cd17747">
    <property type="entry name" value="BRCT_PARP1"/>
    <property type="match status" value="1"/>
</dbReference>
<dbReference type="CDD" id="cd01437">
    <property type="entry name" value="parp_like"/>
    <property type="match status" value="1"/>
</dbReference>
<dbReference type="CDD" id="cd08001">
    <property type="entry name" value="WGR_PARP1_like"/>
    <property type="match status" value="1"/>
</dbReference>
<dbReference type="FunFam" id="1.20.142.10:FF:000004">
    <property type="entry name" value="Poly [ADP-ribose] polymerase"/>
    <property type="match status" value="1"/>
</dbReference>
<dbReference type="FunFam" id="3.90.228.10:FF:000010">
    <property type="entry name" value="Poly [ADP-ribose] polymerase"/>
    <property type="match status" value="1"/>
</dbReference>
<dbReference type="Gene3D" id="3.90.228.10">
    <property type="match status" value="1"/>
</dbReference>
<dbReference type="Gene3D" id="3.90.640.80">
    <property type="match status" value="1"/>
</dbReference>
<dbReference type="Gene3D" id="3.40.50.10190">
    <property type="entry name" value="BRCT domain"/>
    <property type="match status" value="1"/>
</dbReference>
<dbReference type="Gene3D" id="1.20.142.10">
    <property type="entry name" value="Poly(ADP-ribose) polymerase, regulatory domain"/>
    <property type="match status" value="1"/>
</dbReference>
<dbReference type="InterPro" id="IPR050800">
    <property type="entry name" value="ARTD/PARP"/>
</dbReference>
<dbReference type="InterPro" id="IPR001357">
    <property type="entry name" value="BRCT_dom"/>
</dbReference>
<dbReference type="InterPro" id="IPR036420">
    <property type="entry name" value="BRCT_dom_sf"/>
</dbReference>
<dbReference type="InterPro" id="IPR049296">
    <property type="entry name" value="PARP1-like_PADR1_N"/>
</dbReference>
<dbReference type="InterPro" id="IPR012982">
    <property type="entry name" value="PARP1-like_PADR1_Zn_ribbon"/>
</dbReference>
<dbReference type="InterPro" id="IPR012317">
    <property type="entry name" value="Poly(ADP-ribose)pol_cat_dom"/>
</dbReference>
<dbReference type="InterPro" id="IPR004102">
    <property type="entry name" value="Poly(ADP-ribose)pol_reg_dom"/>
</dbReference>
<dbReference type="InterPro" id="IPR036616">
    <property type="entry name" value="Poly(ADP-ribose)pol_reg_dom_sf"/>
</dbReference>
<dbReference type="InterPro" id="IPR036930">
    <property type="entry name" value="WGR_dom_sf"/>
</dbReference>
<dbReference type="InterPro" id="IPR008893">
    <property type="entry name" value="WGR_domain"/>
</dbReference>
<dbReference type="PANTHER" id="PTHR10459">
    <property type="entry name" value="DNA LIGASE"/>
    <property type="match status" value="1"/>
</dbReference>
<dbReference type="PANTHER" id="PTHR10459:SF106">
    <property type="entry name" value="PROTEIN ADP-RIBOSYLTRANSFERASE PARP3"/>
    <property type="match status" value="1"/>
</dbReference>
<dbReference type="Pfam" id="PF00533">
    <property type="entry name" value="BRCT"/>
    <property type="match status" value="1"/>
</dbReference>
<dbReference type="Pfam" id="PF21728">
    <property type="entry name" value="PADR1_N"/>
    <property type="match status" value="1"/>
</dbReference>
<dbReference type="Pfam" id="PF00644">
    <property type="entry name" value="PARP"/>
    <property type="match status" value="1"/>
</dbReference>
<dbReference type="Pfam" id="PF02877">
    <property type="entry name" value="PARP_reg"/>
    <property type="match status" value="1"/>
</dbReference>
<dbReference type="Pfam" id="PF05406">
    <property type="entry name" value="WGR"/>
    <property type="match status" value="1"/>
</dbReference>
<dbReference type="Pfam" id="PF08063">
    <property type="entry name" value="Zn_ribbon_PADR1"/>
    <property type="match status" value="1"/>
</dbReference>
<dbReference type="SMART" id="SM00292">
    <property type="entry name" value="BRCT"/>
    <property type="match status" value="1"/>
</dbReference>
<dbReference type="SMART" id="SM01335">
    <property type="entry name" value="PADR1"/>
    <property type="match status" value="1"/>
</dbReference>
<dbReference type="SMART" id="SM00773">
    <property type="entry name" value="WGR"/>
    <property type="match status" value="1"/>
</dbReference>
<dbReference type="SUPFAM" id="SSF56399">
    <property type="entry name" value="ADP-ribosylation"/>
    <property type="match status" value="1"/>
</dbReference>
<dbReference type="SUPFAM" id="SSF52113">
    <property type="entry name" value="BRCT domain"/>
    <property type="match status" value="1"/>
</dbReference>
<dbReference type="SUPFAM" id="SSF47587">
    <property type="entry name" value="Domain of poly(ADP-ribose) polymerase"/>
    <property type="match status" value="1"/>
</dbReference>
<dbReference type="SUPFAM" id="SSF142921">
    <property type="entry name" value="WGR domain-like"/>
    <property type="match status" value="1"/>
</dbReference>
<dbReference type="PROSITE" id="PS50172">
    <property type="entry name" value="BRCT"/>
    <property type="match status" value="1"/>
</dbReference>
<dbReference type="PROSITE" id="PS52007">
    <property type="entry name" value="PADR1"/>
    <property type="match status" value="1"/>
</dbReference>
<dbReference type="PROSITE" id="PS51060">
    <property type="entry name" value="PARP_ALPHA_HD"/>
    <property type="match status" value="1"/>
</dbReference>
<dbReference type="PROSITE" id="PS51059">
    <property type="entry name" value="PARP_CATALYTIC"/>
    <property type="match status" value="1"/>
</dbReference>
<dbReference type="PROSITE" id="PS51977">
    <property type="entry name" value="WGR"/>
    <property type="match status" value="1"/>
</dbReference>
<feature type="chain" id="PRO_0000260498" description="Protein ADP-ribosyltransferase PARP3">
    <location>
        <begin position="1"/>
        <end position="814"/>
    </location>
</feature>
<feature type="domain" description="PADR1 zinc-binding" evidence="6">
    <location>
        <begin position="38"/>
        <end position="186"/>
    </location>
</feature>
<feature type="repeat" description="TPR 1">
    <location>
        <begin position="182"/>
        <end position="215"/>
    </location>
</feature>
<feature type="domain" description="BRCT" evidence="2">
    <location>
        <begin position="187"/>
        <end position="274"/>
    </location>
</feature>
<feature type="repeat" description="TPR 2">
    <location>
        <begin position="277"/>
        <end position="310"/>
    </location>
</feature>
<feature type="domain" description="WGR" evidence="5">
    <location>
        <begin position="322"/>
        <end position="422"/>
    </location>
</feature>
<feature type="domain" description="PARP alpha-helical" evidence="4">
    <location>
        <begin position="449"/>
        <end position="568"/>
    </location>
</feature>
<feature type="domain" description="PARP catalytic" evidence="3">
    <location>
        <begin position="577"/>
        <end position="808"/>
    </location>
</feature>
<feature type="region of interest" description="Disordered" evidence="7">
    <location>
        <begin position="1"/>
        <end position="52"/>
    </location>
</feature>
<feature type="region of interest" description="Zinc ribbon" evidence="6">
    <location>
        <begin position="105"/>
        <end position="150"/>
    </location>
</feature>
<feature type="compositionally biased region" description="Basic and acidic residues" evidence="7">
    <location>
        <begin position="1"/>
        <end position="19"/>
    </location>
</feature>
<feature type="compositionally biased region" description="Basic and acidic residues" evidence="7">
    <location>
        <begin position="27"/>
        <end position="48"/>
    </location>
</feature>
<feature type="binding site" evidence="6">
    <location>
        <position position="110"/>
    </location>
    <ligand>
        <name>Zn(2+)</name>
        <dbReference type="ChEBI" id="CHEBI:29105"/>
    </ligand>
</feature>
<feature type="binding site" evidence="6">
    <location>
        <position position="113"/>
    </location>
    <ligand>
        <name>Zn(2+)</name>
        <dbReference type="ChEBI" id="CHEBI:29105"/>
    </ligand>
</feature>
<feature type="binding site" evidence="6">
    <location>
        <position position="127"/>
    </location>
    <ligand>
        <name>Zn(2+)</name>
        <dbReference type="ChEBI" id="CHEBI:29105"/>
    </ligand>
</feature>
<feature type="binding site" evidence="6">
    <location>
        <position position="137"/>
    </location>
    <ligand>
        <name>Zn(2+)</name>
        <dbReference type="ChEBI" id="CHEBI:29105"/>
    </ligand>
</feature>
<feature type="sequence conflict" description="In Ref. 3; BAC42749." evidence="8" ref="3">
    <original>G</original>
    <variation>V</variation>
    <location>
        <position position="444"/>
    </location>
</feature>
<keyword id="KW-0013">ADP-ribosylation</keyword>
<keyword id="KW-0328">Glycosyltransferase</keyword>
<keyword id="KW-0479">Metal-binding</keyword>
<keyword id="KW-0520">NAD</keyword>
<keyword id="KW-0548">Nucleotidyltransferase</keyword>
<keyword id="KW-0539">Nucleus</keyword>
<keyword id="KW-1185">Reference proteome</keyword>
<keyword id="KW-0677">Repeat</keyword>
<keyword id="KW-0802">TPR repeat</keyword>
<keyword id="KW-0808">Transferase</keyword>
<keyword id="KW-0862">Zinc</keyword>
<keyword id="KW-0863">Zinc-finger</keyword>
<comment type="function">
    <text evidence="1">Involved in the base excision repair (BER) pathway, by catalyzing the poly(ADP-ribosyl)ation of a limited number of acceptor proteins involved in chromatin architecture and in DNA metabolism. This modification follows DNA damages and appears as an obligatory step in a detection/signaling pathway leading to the reparation of DNA strand breaks (By similarity).</text>
</comment>
<comment type="catalytic activity">
    <reaction evidence="1">
        <text>L-aspartyl-[protein] + NAD(+) = 4-O-(ADP-D-ribosyl)-L-aspartyl-[protein] + nicotinamide</text>
        <dbReference type="Rhea" id="RHEA:54424"/>
        <dbReference type="Rhea" id="RHEA-COMP:9867"/>
        <dbReference type="Rhea" id="RHEA-COMP:13832"/>
        <dbReference type="ChEBI" id="CHEBI:17154"/>
        <dbReference type="ChEBI" id="CHEBI:29961"/>
        <dbReference type="ChEBI" id="CHEBI:57540"/>
        <dbReference type="ChEBI" id="CHEBI:138102"/>
    </reaction>
</comment>
<comment type="catalytic activity">
    <reaction evidence="1">
        <text>L-glutamyl-[protein] + NAD(+) = 5-O-(ADP-D-ribosyl)-L-glutamyl-[protein] + nicotinamide</text>
        <dbReference type="Rhea" id="RHEA:58224"/>
        <dbReference type="Rhea" id="RHEA-COMP:10208"/>
        <dbReference type="Rhea" id="RHEA-COMP:15089"/>
        <dbReference type="ChEBI" id="CHEBI:17154"/>
        <dbReference type="ChEBI" id="CHEBI:29973"/>
        <dbReference type="ChEBI" id="CHEBI:57540"/>
        <dbReference type="ChEBI" id="CHEBI:142540"/>
    </reaction>
</comment>
<comment type="subcellular location">
    <subcellularLocation>
        <location evidence="8">Nucleus</location>
    </subcellularLocation>
</comment>
<comment type="similarity">
    <text evidence="6 8">Belongs to the ARTD/PARP family.</text>
</comment>
<comment type="sequence caution" evidence="8">
    <conflict type="erroneous gene model prediction">
        <sequence resource="EMBL-CDS" id="BAB09119"/>
    </conflict>
</comment>
<accession>Q9FK91</accession>
<accession>F4K9W5</accession>
<accession>Q8GXP3</accession>
<evidence type="ECO:0000250" key="1">
    <source>
        <dbReference type="UniProtKB" id="Q9Y6F1"/>
    </source>
</evidence>
<evidence type="ECO:0000255" key="2">
    <source>
        <dbReference type="PROSITE-ProRule" id="PRU00033"/>
    </source>
</evidence>
<evidence type="ECO:0000255" key="3">
    <source>
        <dbReference type="PROSITE-ProRule" id="PRU00397"/>
    </source>
</evidence>
<evidence type="ECO:0000255" key="4">
    <source>
        <dbReference type="PROSITE-ProRule" id="PRU00398"/>
    </source>
</evidence>
<evidence type="ECO:0000255" key="5">
    <source>
        <dbReference type="PROSITE-ProRule" id="PRU01321"/>
    </source>
</evidence>
<evidence type="ECO:0000255" key="6">
    <source>
        <dbReference type="PROSITE-ProRule" id="PRU01351"/>
    </source>
</evidence>
<evidence type="ECO:0000256" key="7">
    <source>
        <dbReference type="SAM" id="MobiDB-lite"/>
    </source>
</evidence>
<evidence type="ECO:0000305" key="8"/>